<gene>
    <name evidence="1" type="primary">msrB</name>
    <name type="ordered locus">CJA_2372</name>
</gene>
<keyword id="KW-0479">Metal-binding</keyword>
<keyword id="KW-0560">Oxidoreductase</keyword>
<keyword id="KW-1185">Reference proteome</keyword>
<keyword id="KW-0862">Zinc</keyword>
<name>MSRB_CELJU</name>
<proteinExistence type="inferred from homology"/>
<dbReference type="EC" id="1.8.4.12" evidence="1"/>
<dbReference type="EMBL" id="CP000934">
    <property type="protein sequence ID" value="ACE86046.1"/>
    <property type="molecule type" value="Genomic_DNA"/>
</dbReference>
<dbReference type="RefSeq" id="WP_012487970.1">
    <property type="nucleotide sequence ID" value="NC_010995.1"/>
</dbReference>
<dbReference type="SMR" id="B3PK10"/>
<dbReference type="STRING" id="498211.CJA_2372"/>
<dbReference type="KEGG" id="cja:CJA_2372"/>
<dbReference type="eggNOG" id="COG0229">
    <property type="taxonomic scope" value="Bacteria"/>
</dbReference>
<dbReference type="HOGENOM" id="CLU_031040_8_5_6"/>
<dbReference type="OrthoDB" id="9785497at2"/>
<dbReference type="Proteomes" id="UP000001036">
    <property type="component" value="Chromosome"/>
</dbReference>
<dbReference type="GO" id="GO:0005737">
    <property type="term" value="C:cytoplasm"/>
    <property type="evidence" value="ECO:0007669"/>
    <property type="project" value="TreeGrafter"/>
</dbReference>
<dbReference type="GO" id="GO:0033743">
    <property type="term" value="F:peptide-methionine (R)-S-oxide reductase activity"/>
    <property type="evidence" value="ECO:0007669"/>
    <property type="project" value="UniProtKB-UniRule"/>
</dbReference>
<dbReference type="GO" id="GO:0008270">
    <property type="term" value="F:zinc ion binding"/>
    <property type="evidence" value="ECO:0007669"/>
    <property type="project" value="UniProtKB-UniRule"/>
</dbReference>
<dbReference type="GO" id="GO:0030091">
    <property type="term" value="P:protein repair"/>
    <property type="evidence" value="ECO:0007669"/>
    <property type="project" value="InterPro"/>
</dbReference>
<dbReference type="GO" id="GO:0006979">
    <property type="term" value="P:response to oxidative stress"/>
    <property type="evidence" value="ECO:0007669"/>
    <property type="project" value="InterPro"/>
</dbReference>
<dbReference type="FunFam" id="2.170.150.20:FF:000001">
    <property type="entry name" value="Peptide methionine sulfoxide reductase MsrB"/>
    <property type="match status" value="1"/>
</dbReference>
<dbReference type="Gene3D" id="2.170.150.20">
    <property type="entry name" value="Peptide methionine sulfoxide reductase"/>
    <property type="match status" value="1"/>
</dbReference>
<dbReference type="HAMAP" id="MF_01400">
    <property type="entry name" value="MsrB"/>
    <property type="match status" value="1"/>
</dbReference>
<dbReference type="InterPro" id="IPR028427">
    <property type="entry name" value="Met_Sox_Rdtase_MsrB"/>
</dbReference>
<dbReference type="InterPro" id="IPR002579">
    <property type="entry name" value="Met_Sox_Rdtase_MsrB_dom"/>
</dbReference>
<dbReference type="InterPro" id="IPR011057">
    <property type="entry name" value="Mss4-like_sf"/>
</dbReference>
<dbReference type="NCBIfam" id="TIGR00357">
    <property type="entry name" value="peptide-methionine (R)-S-oxide reductase MsrB"/>
    <property type="match status" value="1"/>
</dbReference>
<dbReference type="PANTHER" id="PTHR10173">
    <property type="entry name" value="METHIONINE SULFOXIDE REDUCTASE"/>
    <property type="match status" value="1"/>
</dbReference>
<dbReference type="PANTHER" id="PTHR10173:SF52">
    <property type="entry name" value="METHIONINE-R-SULFOXIDE REDUCTASE B1"/>
    <property type="match status" value="1"/>
</dbReference>
<dbReference type="Pfam" id="PF01641">
    <property type="entry name" value="SelR"/>
    <property type="match status" value="1"/>
</dbReference>
<dbReference type="SUPFAM" id="SSF51316">
    <property type="entry name" value="Mss4-like"/>
    <property type="match status" value="1"/>
</dbReference>
<dbReference type="PROSITE" id="PS51790">
    <property type="entry name" value="MSRB"/>
    <property type="match status" value="1"/>
</dbReference>
<feature type="chain" id="PRO_1000215171" description="Peptide methionine sulfoxide reductase MsrB">
    <location>
        <begin position="1"/>
        <end position="140"/>
    </location>
</feature>
<feature type="domain" description="MsrB" evidence="2">
    <location>
        <begin position="9"/>
        <end position="131"/>
    </location>
</feature>
<feature type="active site" description="Nucleophile" evidence="2">
    <location>
        <position position="120"/>
    </location>
</feature>
<feature type="binding site" evidence="2">
    <location>
        <position position="48"/>
    </location>
    <ligand>
        <name>Zn(2+)</name>
        <dbReference type="ChEBI" id="CHEBI:29105"/>
    </ligand>
</feature>
<feature type="binding site" evidence="2">
    <location>
        <position position="51"/>
    </location>
    <ligand>
        <name>Zn(2+)</name>
        <dbReference type="ChEBI" id="CHEBI:29105"/>
    </ligand>
</feature>
<feature type="binding site" evidence="2">
    <location>
        <position position="97"/>
    </location>
    <ligand>
        <name>Zn(2+)</name>
        <dbReference type="ChEBI" id="CHEBI:29105"/>
    </ligand>
</feature>
<feature type="binding site" evidence="2">
    <location>
        <position position="100"/>
    </location>
    <ligand>
        <name>Zn(2+)</name>
        <dbReference type="ChEBI" id="CHEBI:29105"/>
    </ligand>
</feature>
<organism>
    <name type="scientific">Cellvibrio japonicus (strain Ueda107)</name>
    <name type="common">Pseudomonas fluorescens subsp. cellulosa</name>
    <dbReference type="NCBI Taxonomy" id="498211"/>
    <lineage>
        <taxon>Bacteria</taxon>
        <taxon>Pseudomonadati</taxon>
        <taxon>Pseudomonadota</taxon>
        <taxon>Gammaproteobacteria</taxon>
        <taxon>Cellvibrionales</taxon>
        <taxon>Cellvibrionaceae</taxon>
        <taxon>Cellvibrio</taxon>
    </lineage>
</organism>
<protein>
    <recommendedName>
        <fullName evidence="1">Peptide methionine sulfoxide reductase MsrB</fullName>
        <ecNumber evidence="1">1.8.4.12</ecNumber>
    </recommendedName>
    <alternativeName>
        <fullName evidence="1">Peptide-methionine (R)-S-oxide reductase</fullName>
    </alternativeName>
</protein>
<accession>B3PK10</accession>
<reference key="1">
    <citation type="journal article" date="2008" name="J. Bacteriol.">
        <title>Insights into plant cell wall degradation from the genome sequence of the soil bacterium Cellvibrio japonicus.</title>
        <authorList>
            <person name="DeBoy R.T."/>
            <person name="Mongodin E.F."/>
            <person name="Fouts D.E."/>
            <person name="Tailford L.E."/>
            <person name="Khouri H."/>
            <person name="Emerson J.B."/>
            <person name="Mohamoud Y."/>
            <person name="Watkins K."/>
            <person name="Henrissat B."/>
            <person name="Gilbert H.J."/>
            <person name="Nelson K.E."/>
        </authorList>
    </citation>
    <scope>NUCLEOTIDE SEQUENCE [LARGE SCALE GENOMIC DNA]</scope>
    <source>
        <strain>Ueda107</strain>
    </source>
</reference>
<evidence type="ECO:0000255" key="1">
    <source>
        <dbReference type="HAMAP-Rule" id="MF_01400"/>
    </source>
</evidence>
<evidence type="ECO:0000255" key="2">
    <source>
        <dbReference type="PROSITE-ProRule" id="PRU01126"/>
    </source>
</evidence>
<comment type="catalytic activity">
    <reaction evidence="1">
        <text>L-methionyl-[protein] + [thioredoxin]-disulfide + H2O = L-methionyl-(R)-S-oxide-[protein] + [thioredoxin]-dithiol</text>
        <dbReference type="Rhea" id="RHEA:24164"/>
        <dbReference type="Rhea" id="RHEA-COMP:10698"/>
        <dbReference type="Rhea" id="RHEA-COMP:10700"/>
        <dbReference type="Rhea" id="RHEA-COMP:12313"/>
        <dbReference type="Rhea" id="RHEA-COMP:12314"/>
        <dbReference type="ChEBI" id="CHEBI:15377"/>
        <dbReference type="ChEBI" id="CHEBI:16044"/>
        <dbReference type="ChEBI" id="CHEBI:29950"/>
        <dbReference type="ChEBI" id="CHEBI:45764"/>
        <dbReference type="ChEBI" id="CHEBI:50058"/>
        <dbReference type="EC" id="1.8.4.12"/>
    </reaction>
</comment>
<comment type="cofactor">
    <cofactor evidence="1">
        <name>Zn(2+)</name>
        <dbReference type="ChEBI" id="CHEBI:29105"/>
    </cofactor>
    <text evidence="1">Binds 1 zinc ion per subunit. The zinc ion is important for the structural integrity of the protein.</text>
</comment>
<comment type="similarity">
    <text evidence="1">Belongs to the MsrB Met sulfoxide reductase family.</text>
</comment>
<sequence length="140" mass="16179">MSDNEKFNDALWREKLTPEQYRICREKGTERPFTGEYWQEFRPGRYHCRCCGELLFDADTKFDAGCGWPSFYTPATKTAVREQLDTSHGMYRTEVLCRRCDCHLGHVFTDGPEPTGLRYCINSASIVLDSEQVSFTPSTL</sequence>